<evidence type="ECO:0000255" key="1">
    <source>
        <dbReference type="HAMAP-Rule" id="MF_01364"/>
    </source>
</evidence>
<evidence type="ECO:0000305" key="2"/>
<sequence length="61" mass="7073">MAKKSMIAKNKRPAKHSTQAYTRCEKCGRPHSVYRKFKLCRVCFRELAYKGQIPGVVKASW</sequence>
<comment type="function">
    <text evidence="1">Binds 16S rRNA, required for the assembly of 30S particles and may also be responsible for determining the conformation of the 16S rRNA at the A site.</text>
</comment>
<comment type="cofactor">
    <cofactor evidence="1">
        <name>Zn(2+)</name>
        <dbReference type="ChEBI" id="CHEBI:29105"/>
    </cofactor>
    <text evidence="1">Binds 1 zinc ion per subunit.</text>
</comment>
<comment type="subunit">
    <text evidence="1">Part of the 30S ribosomal subunit. Contacts proteins S3 and S10.</text>
</comment>
<comment type="similarity">
    <text evidence="1">Belongs to the universal ribosomal protein uS14 family. Zinc-binding uS14 subfamily.</text>
</comment>
<protein>
    <recommendedName>
        <fullName evidence="1">Small ribosomal subunit protein uS14B</fullName>
    </recommendedName>
    <alternativeName>
        <fullName evidence="2">30S ribosomal protein S14 type Z</fullName>
    </alternativeName>
</protein>
<accession>Q1JP04</accession>
<gene>
    <name evidence="1" type="primary">rpsZ</name>
    <name evidence="1" type="synonym">rpsN1</name>
    <name type="ordered locus">MGAS9429_Spy0057</name>
</gene>
<keyword id="KW-0479">Metal-binding</keyword>
<keyword id="KW-0687">Ribonucleoprotein</keyword>
<keyword id="KW-0689">Ribosomal protein</keyword>
<keyword id="KW-0694">RNA-binding</keyword>
<keyword id="KW-0699">rRNA-binding</keyword>
<keyword id="KW-0862">Zinc</keyword>
<proteinExistence type="inferred from homology"/>
<dbReference type="EMBL" id="CP000259">
    <property type="protein sequence ID" value="ABF31245.1"/>
    <property type="molecule type" value="Genomic_DNA"/>
</dbReference>
<dbReference type="RefSeq" id="WP_002987746.1">
    <property type="nucleotide sequence ID" value="NC_008021.1"/>
</dbReference>
<dbReference type="SMR" id="Q1JP04"/>
<dbReference type="KEGG" id="spk:MGAS9429_Spy0057"/>
<dbReference type="HOGENOM" id="CLU_139869_3_0_9"/>
<dbReference type="Proteomes" id="UP000002433">
    <property type="component" value="Chromosome"/>
</dbReference>
<dbReference type="GO" id="GO:0015935">
    <property type="term" value="C:small ribosomal subunit"/>
    <property type="evidence" value="ECO:0007669"/>
    <property type="project" value="TreeGrafter"/>
</dbReference>
<dbReference type="GO" id="GO:0019843">
    <property type="term" value="F:rRNA binding"/>
    <property type="evidence" value="ECO:0007669"/>
    <property type="project" value="UniProtKB-UniRule"/>
</dbReference>
<dbReference type="GO" id="GO:0003735">
    <property type="term" value="F:structural constituent of ribosome"/>
    <property type="evidence" value="ECO:0007669"/>
    <property type="project" value="InterPro"/>
</dbReference>
<dbReference type="GO" id="GO:0008270">
    <property type="term" value="F:zinc ion binding"/>
    <property type="evidence" value="ECO:0007669"/>
    <property type="project" value="UniProtKB-UniRule"/>
</dbReference>
<dbReference type="GO" id="GO:0006412">
    <property type="term" value="P:translation"/>
    <property type="evidence" value="ECO:0007669"/>
    <property type="project" value="UniProtKB-UniRule"/>
</dbReference>
<dbReference type="FunFam" id="4.10.830.10:FF:000001">
    <property type="entry name" value="30S ribosomal protein S14 type Z"/>
    <property type="match status" value="1"/>
</dbReference>
<dbReference type="Gene3D" id="4.10.830.10">
    <property type="entry name" value="30s Ribosomal Protein S14, Chain N"/>
    <property type="match status" value="1"/>
</dbReference>
<dbReference type="HAMAP" id="MF_01364_B">
    <property type="entry name" value="Ribosomal_uS14_2_B"/>
    <property type="match status" value="1"/>
</dbReference>
<dbReference type="InterPro" id="IPR001209">
    <property type="entry name" value="Ribosomal_uS14"/>
</dbReference>
<dbReference type="InterPro" id="IPR023053">
    <property type="entry name" value="Ribosomal_uS14_bact"/>
</dbReference>
<dbReference type="InterPro" id="IPR018271">
    <property type="entry name" value="Ribosomal_uS14_CS"/>
</dbReference>
<dbReference type="InterPro" id="IPR043140">
    <property type="entry name" value="Ribosomal_uS14_sf"/>
</dbReference>
<dbReference type="NCBIfam" id="NF005974">
    <property type="entry name" value="PRK08061.1"/>
    <property type="match status" value="1"/>
</dbReference>
<dbReference type="PANTHER" id="PTHR19836">
    <property type="entry name" value="30S RIBOSOMAL PROTEIN S14"/>
    <property type="match status" value="1"/>
</dbReference>
<dbReference type="PANTHER" id="PTHR19836:SF26">
    <property type="entry name" value="SMALL RIBOSOMAL SUBUNIT PROTEIN US14B"/>
    <property type="match status" value="1"/>
</dbReference>
<dbReference type="Pfam" id="PF00253">
    <property type="entry name" value="Ribosomal_S14"/>
    <property type="match status" value="1"/>
</dbReference>
<dbReference type="SUPFAM" id="SSF57716">
    <property type="entry name" value="Glucocorticoid receptor-like (DNA-binding domain)"/>
    <property type="match status" value="1"/>
</dbReference>
<dbReference type="PROSITE" id="PS00527">
    <property type="entry name" value="RIBOSOMAL_S14"/>
    <property type="match status" value="1"/>
</dbReference>
<feature type="chain" id="PRO_0000269145" description="Small ribosomal subunit protein uS14B">
    <location>
        <begin position="1"/>
        <end position="61"/>
    </location>
</feature>
<feature type="binding site" evidence="1">
    <location>
        <position position="24"/>
    </location>
    <ligand>
        <name>Zn(2+)</name>
        <dbReference type="ChEBI" id="CHEBI:29105"/>
    </ligand>
</feature>
<feature type="binding site" evidence="1">
    <location>
        <position position="27"/>
    </location>
    <ligand>
        <name>Zn(2+)</name>
        <dbReference type="ChEBI" id="CHEBI:29105"/>
    </ligand>
</feature>
<feature type="binding site" evidence="1">
    <location>
        <position position="40"/>
    </location>
    <ligand>
        <name>Zn(2+)</name>
        <dbReference type="ChEBI" id="CHEBI:29105"/>
    </ligand>
</feature>
<feature type="binding site" evidence="1">
    <location>
        <position position="43"/>
    </location>
    <ligand>
        <name>Zn(2+)</name>
        <dbReference type="ChEBI" id="CHEBI:29105"/>
    </ligand>
</feature>
<reference key="1">
    <citation type="journal article" date="2006" name="Proc. Natl. Acad. Sci. U.S.A.">
        <title>Molecular genetic anatomy of inter- and intraserotype variation in the human bacterial pathogen group A Streptococcus.</title>
        <authorList>
            <person name="Beres S.B."/>
            <person name="Richter E.W."/>
            <person name="Nagiec M.J."/>
            <person name="Sumby P."/>
            <person name="Porcella S.F."/>
            <person name="DeLeo F.R."/>
            <person name="Musser J.M."/>
        </authorList>
    </citation>
    <scope>NUCLEOTIDE SEQUENCE [LARGE SCALE GENOMIC DNA]</scope>
    <source>
        <strain>MGAS9429</strain>
    </source>
</reference>
<organism>
    <name type="scientific">Streptococcus pyogenes serotype M12 (strain MGAS9429)</name>
    <dbReference type="NCBI Taxonomy" id="370551"/>
    <lineage>
        <taxon>Bacteria</taxon>
        <taxon>Bacillati</taxon>
        <taxon>Bacillota</taxon>
        <taxon>Bacilli</taxon>
        <taxon>Lactobacillales</taxon>
        <taxon>Streptococcaceae</taxon>
        <taxon>Streptococcus</taxon>
    </lineage>
</organism>
<name>RS14Z_STRPC</name>